<protein>
    <recommendedName>
        <fullName evidence="1">tRNA-2-methylthio-N(6)-dimethylallyladenosine synthase</fullName>
        <ecNumber evidence="1">2.8.4.3</ecNumber>
    </recommendedName>
    <alternativeName>
        <fullName evidence="1">(Dimethylallyl)adenosine tRNA methylthiotransferase MiaB</fullName>
    </alternativeName>
    <alternativeName>
        <fullName evidence="1">tRNA-i(6)A37 methylthiotransferase</fullName>
    </alternativeName>
</protein>
<gene>
    <name evidence="1" type="primary">miaB</name>
    <name type="ordered locus">HPG27_248</name>
</gene>
<name>MIAB_HELPG</name>
<dbReference type="EC" id="2.8.4.3" evidence="1"/>
<dbReference type="EMBL" id="CP001173">
    <property type="protein sequence ID" value="ACI27015.1"/>
    <property type="molecule type" value="Genomic_DNA"/>
</dbReference>
<dbReference type="RefSeq" id="WP_000870242.1">
    <property type="nucleotide sequence ID" value="NC_011333.1"/>
</dbReference>
<dbReference type="SMR" id="B5ZA35"/>
<dbReference type="KEGG" id="hpg:HPG27_248"/>
<dbReference type="HOGENOM" id="CLU_018697_2_0_7"/>
<dbReference type="Proteomes" id="UP000001735">
    <property type="component" value="Chromosome"/>
</dbReference>
<dbReference type="GO" id="GO:0005829">
    <property type="term" value="C:cytosol"/>
    <property type="evidence" value="ECO:0007669"/>
    <property type="project" value="TreeGrafter"/>
</dbReference>
<dbReference type="GO" id="GO:0051539">
    <property type="term" value="F:4 iron, 4 sulfur cluster binding"/>
    <property type="evidence" value="ECO:0007669"/>
    <property type="project" value="UniProtKB-UniRule"/>
</dbReference>
<dbReference type="GO" id="GO:0046872">
    <property type="term" value="F:metal ion binding"/>
    <property type="evidence" value="ECO:0007669"/>
    <property type="project" value="UniProtKB-KW"/>
</dbReference>
<dbReference type="GO" id="GO:0035597">
    <property type="term" value="F:N6-isopentenyladenosine methylthiotransferase activity"/>
    <property type="evidence" value="ECO:0007669"/>
    <property type="project" value="TreeGrafter"/>
</dbReference>
<dbReference type="CDD" id="cd01335">
    <property type="entry name" value="Radical_SAM"/>
    <property type="match status" value="1"/>
</dbReference>
<dbReference type="FunFam" id="3.40.50.12160:FF:000003">
    <property type="entry name" value="CDK5 regulatory subunit-associated protein 1"/>
    <property type="match status" value="1"/>
</dbReference>
<dbReference type="FunFam" id="3.80.30.20:FF:000013">
    <property type="entry name" value="tRNA-2-methylthio-N(6)-dimethylallyladenosine synthase"/>
    <property type="match status" value="1"/>
</dbReference>
<dbReference type="Gene3D" id="3.40.50.12160">
    <property type="entry name" value="Methylthiotransferase, N-terminal domain"/>
    <property type="match status" value="1"/>
</dbReference>
<dbReference type="Gene3D" id="3.80.30.20">
    <property type="entry name" value="tm_1862 like domain"/>
    <property type="match status" value="1"/>
</dbReference>
<dbReference type="HAMAP" id="MF_01864">
    <property type="entry name" value="tRNA_metthiotr_MiaB"/>
    <property type="match status" value="1"/>
</dbReference>
<dbReference type="InterPro" id="IPR006638">
    <property type="entry name" value="Elp3/MiaA/NifB-like_rSAM"/>
</dbReference>
<dbReference type="InterPro" id="IPR005839">
    <property type="entry name" value="Methylthiotransferase"/>
</dbReference>
<dbReference type="InterPro" id="IPR020612">
    <property type="entry name" value="Methylthiotransferase_CS"/>
</dbReference>
<dbReference type="InterPro" id="IPR013848">
    <property type="entry name" value="Methylthiotransferase_N"/>
</dbReference>
<dbReference type="InterPro" id="IPR038135">
    <property type="entry name" value="Methylthiotransferase_N_sf"/>
</dbReference>
<dbReference type="InterPro" id="IPR006463">
    <property type="entry name" value="MiaB_methiolase"/>
</dbReference>
<dbReference type="InterPro" id="IPR007197">
    <property type="entry name" value="rSAM"/>
</dbReference>
<dbReference type="InterPro" id="IPR023404">
    <property type="entry name" value="rSAM_horseshoe"/>
</dbReference>
<dbReference type="InterPro" id="IPR002792">
    <property type="entry name" value="TRAM_dom"/>
</dbReference>
<dbReference type="NCBIfam" id="TIGR01574">
    <property type="entry name" value="miaB-methiolase"/>
    <property type="match status" value="1"/>
</dbReference>
<dbReference type="NCBIfam" id="TIGR00089">
    <property type="entry name" value="MiaB/RimO family radical SAM methylthiotransferase"/>
    <property type="match status" value="1"/>
</dbReference>
<dbReference type="PANTHER" id="PTHR43020">
    <property type="entry name" value="CDK5 REGULATORY SUBUNIT-ASSOCIATED PROTEIN 1"/>
    <property type="match status" value="1"/>
</dbReference>
<dbReference type="PANTHER" id="PTHR43020:SF2">
    <property type="entry name" value="MITOCHONDRIAL TRNA METHYLTHIOTRANSFERASE CDK5RAP1"/>
    <property type="match status" value="1"/>
</dbReference>
<dbReference type="Pfam" id="PF04055">
    <property type="entry name" value="Radical_SAM"/>
    <property type="match status" value="1"/>
</dbReference>
<dbReference type="Pfam" id="PF00919">
    <property type="entry name" value="UPF0004"/>
    <property type="match status" value="1"/>
</dbReference>
<dbReference type="SFLD" id="SFLDF00273">
    <property type="entry name" value="(dimethylallyl)adenosine_tRNA"/>
    <property type="match status" value="1"/>
</dbReference>
<dbReference type="SFLD" id="SFLDG01082">
    <property type="entry name" value="B12-binding_domain_containing"/>
    <property type="match status" value="1"/>
</dbReference>
<dbReference type="SFLD" id="SFLDS00029">
    <property type="entry name" value="Radical_SAM"/>
    <property type="match status" value="1"/>
</dbReference>
<dbReference type="SMART" id="SM00729">
    <property type="entry name" value="Elp3"/>
    <property type="match status" value="1"/>
</dbReference>
<dbReference type="SUPFAM" id="SSF102114">
    <property type="entry name" value="Radical SAM enzymes"/>
    <property type="match status" value="1"/>
</dbReference>
<dbReference type="PROSITE" id="PS51449">
    <property type="entry name" value="MTTASE_N"/>
    <property type="match status" value="1"/>
</dbReference>
<dbReference type="PROSITE" id="PS01278">
    <property type="entry name" value="MTTASE_RADICAL"/>
    <property type="match status" value="1"/>
</dbReference>
<dbReference type="PROSITE" id="PS51918">
    <property type="entry name" value="RADICAL_SAM"/>
    <property type="match status" value="1"/>
</dbReference>
<dbReference type="PROSITE" id="PS50926">
    <property type="entry name" value="TRAM"/>
    <property type="match status" value="1"/>
</dbReference>
<proteinExistence type="inferred from homology"/>
<reference key="1">
    <citation type="journal article" date="2009" name="J. Bacteriol.">
        <title>The complete genome sequence of Helicobacter pylori strain G27.</title>
        <authorList>
            <person name="Baltrus D.A."/>
            <person name="Amieva M.R."/>
            <person name="Covacci A."/>
            <person name="Lowe T.M."/>
            <person name="Merrell D.S."/>
            <person name="Ottemann K.M."/>
            <person name="Stein M."/>
            <person name="Salama N.R."/>
            <person name="Guillemin K."/>
        </authorList>
    </citation>
    <scope>NUCLEOTIDE SEQUENCE [LARGE SCALE GENOMIC DNA]</scope>
    <source>
        <strain>G27</strain>
    </source>
</reference>
<comment type="function">
    <text evidence="1">Catalyzes the methylthiolation of N6-(dimethylallyl)adenosine (i(6)A), leading to the formation of 2-methylthio-N6-(dimethylallyl)adenosine (ms(2)i(6)A) at position 37 in tRNAs that read codons beginning with uridine.</text>
</comment>
<comment type="catalytic activity">
    <reaction evidence="1">
        <text>N(6)-dimethylallyladenosine(37) in tRNA + (sulfur carrier)-SH + AH2 + 2 S-adenosyl-L-methionine = 2-methylsulfanyl-N(6)-dimethylallyladenosine(37) in tRNA + (sulfur carrier)-H + 5'-deoxyadenosine + L-methionine + A + S-adenosyl-L-homocysteine + 2 H(+)</text>
        <dbReference type="Rhea" id="RHEA:37067"/>
        <dbReference type="Rhea" id="RHEA-COMP:10375"/>
        <dbReference type="Rhea" id="RHEA-COMP:10376"/>
        <dbReference type="Rhea" id="RHEA-COMP:14737"/>
        <dbReference type="Rhea" id="RHEA-COMP:14739"/>
        <dbReference type="ChEBI" id="CHEBI:13193"/>
        <dbReference type="ChEBI" id="CHEBI:15378"/>
        <dbReference type="ChEBI" id="CHEBI:17319"/>
        <dbReference type="ChEBI" id="CHEBI:17499"/>
        <dbReference type="ChEBI" id="CHEBI:29917"/>
        <dbReference type="ChEBI" id="CHEBI:57844"/>
        <dbReference type="ChEBI" id="CHEBI:57856"/>
        <dbReference type="ChEBI" id="CHEBI:59789"/>
        <dbReference type="ChEBI" id="CHEBI:64428"/>
        <dbReference type="ChEBI" id="CHEBI:74415"/>
        <dbReference type="ChEBI" id="CHEBI:74417"/>
        <dbReference type="EC" id="2.8.4.3"/>
    </reaction>
</comment>
<comment type="cofactor">
    <cofactor evidence="1">
        <name>[4Fe-4S] cluster</name>
        <dbReference type="ChEBI" id="CHEBI:49883"/>
    </cofactor>
    <text evidence="1">Binds 2 [4Fe-4S] clusters. One cluster is coordinated with 3 cysteines and an exchangeable S-adenosyl-L-methionine.</text>
</comment>
<comment type="subunit">
    <text evidence="1">Monomer.</text>
</comment>
<comment type="subcellular location">
    <subcellularLocation>
        <location evidence="1">Cytoplasm</location>
    </subcellularLocation>
</comment>
<comment type="similarity">
    <text evidence="1">Belongs to the methylthiotransferase family. MiaB subfamily.</text>
</comment>
<organism>
    <name type="scientific">Helicobacter pylori (strain G27)</name>
    <dbReference type="NCBI Taxonomy" id="563041"/>
    <lineage>
        <taxon>Bacteria</taxon>
        <taxon>Pseudomonadati</taxon>
        <taxon>Campylobacterota</taxon>
        <taxon>Epsilonproteobacteria</taxon>
        <taxon>Campylobacterales</taxon>
        <taxon>Helicobacteraceae</taxon>
        <taxon>Helicobacter</taxon>
    </lineage>
</organism>
<feature type="chain" id="PRO_0000374337" description="tRNA-2-methylthio-N(6)-dimethylallyladenosine synthase">
    <location>
        <begin position="1"/>
        <end position="437"/>
    </location>
</feature>
<feature type="domain" description="MTTase N-terminal" evidence="1">
    <location>
        <begin position="1"/>
        <end position="115"/>
    </location>
</feature>
<feature type="domain" description="Radical SAM core" evidence="2">
    <location>
        <begin position="134"/>
        <end position="367"/>
    </location>
</feature>
<feature type="domain" description="TRAM" evidence="1">
    <location>
        <begin position="370"/>
        <end position="436"/>
    </location>
</feature>
<feature type="binding site" evidence="1">
    <location>
        <position position="10"/>
    </location>
    <ligand>
        <name>[4Fe-4S] cluster</name>
        <dbReference type="ChEBI" id="CHEBI:49883"/>
        <label>1</label>
    </ligand>
</feature>
<feature type="binding site" evidence="1">
    <location>
        <position position="46"/>
    </location>
    <ligand>
        <name>[4Fe-4S] cluster</name>
        <dbReference type="ChEBI" id="CHEBI:49883"/>
        <label>1</label>
    </ligand>
</feature>
<feature type="binding site" evidence="1">
    <location>
        <position position="78"/>
    </location>
    <ligand>
        <name>[4Fe-4S] cluster</name>
        <dbReference type="ChEBI" id="CHEBI:49883"/>
        <label>1</label>
    </ligand>
</feature>
<feature type="binding site" evidence="1">
    <location>
        <position position="148"/>
    </location>
    <ligand>
        <name>[4Fe-4S] cluster</name>
        <dbReference type="ChEBI" id="CHEBI:49883"/>
        <label>2</label>
        <note>4Fe-4S-S-AdoMet</note>
    </ligand>
</feature>
<feature type="binding site" evidence="1">
    <location>
        <position position="152"/>
    </location>
    <ligand>
        <name>[4Fe-4S] cluster</name>
        <dbReference type="ChEBI" id="CHEBI:49883"/>
        <label>2</label>
        <note>4Fe-4S-S-AdoMet</note>
    </ligand>
</feature>
<feature type="binding site" evidence="1">
    <location>
        <position position="155"/>
    </location>
    <ligand>
        <name>[4Fe-4S] cluster</name>
        <dbReference type="ChEBI" id="CHEBI:49883"/>
        <label>2</label>
        <note>4Fe-4S-S-AdoMet</note>
    </ligand>
</feature>
<keyword id="KW-0004">4Fe-4S</keyword>
<keyword id="KW-0963">Cytoplasm</keyword>
<keyword id="KW-0408">Iron</keyword>
<keyword id="KW-0411">Iron-sulfur</keyword>
<keyword id="KW-0479">Metal-binding</keyword>
<keyword id="KW-1185">Reference proteome</keyword>
<keyword id="KW-0949">S-adenosyl-L-methionine</keyword>
<keyword id="KW-0808">Transferase</keyword>
<keyword id="KW-0819">tRNA processing</keyword>
<accession>B5ZA35</accession>
<sequence length="437" mass="49337">MKVYIETMGCAMNSRDSEHLLSELSKLDYKETSDPKTADLILINTCSVREKPERKLFSEIGQFAKIKKPNAKIGVCGCTASHMGADILKKAPSVSFVLGARNVSKISQVIHKEKAVEVAIDYDESAYAFEFFEKKAQIRSLLNISIGCDKKCAYCIVPHTRGKEISIPMDLILKEAEKLANNGTKELMLLGQNVNNYGARFSSEHAKVDFSDLLDKLSEISGIERIRFTSPHPLHMNDGFLERFAKNPKVCKSIHMPLQSGSSAVLKMMRRGYSKEWFLNRVERLKALVPEVGISTDIIVGFPNESDKDFEDTMEVLEKVRFDTLYSFIYSPRPFTEAGAWKERVPLEVSSSRLERLQNRHKEILEEKAKLEVGKTHVVLVENRREINNQIVGFEGRSDTGKFIEVACKEKRNPGELVEVEIISHSKGRLMATTKGN</sequence>
<evidence type="ECO:0000255" key="1">
    <source>
        <dbReference type="HAMAP-Rule" id="MF_01864"/>
    </source>
</evidence>
<evidence type="ECO:0000255" key="2">
    <source>
        <dbReference type="PROSITE-ProRule" id="PRU01266"/>
    </source>
</evidence>